<keyword id="KW-0067">ATP-binding</keyword>
<keyword id="KW-0119">Carbohydrate metabolism</keyword>
<keyword id="KW-0299">Galactose metabolism</keyword>
<keyword id="KW-0418">Kinase</keyword>
<keyword id="KW-0547">Nucleotide-binding</keyword>
<keyword id="KW-0808">Transferase</keyword>
<accession>O42821</accession>
<gene>
    <name evidence="1" type="primary">GAL1</name>
</gene>
<proteinExistence type="inferred from homology"/>
<evidence type="ECO:0000250" key="1">
    <source>
        <dbReference type="UniProtKB" id="P04385"/>
    </source>
</evidence>
<evidence type="ECO:0000250" key="2">
    <source>
        <dbReference type="UniProtKB" id="Q9HHB6"/>
    </source>
</evidence>
<evidence type="ECO:0000305" key="3"/>
<feature type="chain" id="PRO_0000184654" description="Galactokinase">
    <location>
        <begin position="1"/>
        <end position="504"/>
    </location>
</feature>
<feature type="active site" description="Proton acceptor" evidence="2">
    <location>
        <position position="200"/>
    </location>
</feature>
<feature type="binding site" evidence="1">
    <location>
        <position position="47"/>
    </location>
    <ligand>
        <name>alpha-D-galactose</name>
        <dbReference type="ChEBI" id="CHEBI:28061"/>
    </ligand>
</feature>
<feature type="binding site" evidence="1">
    <location>
        <position position="53"/>
    </location>
    <ligand>
        <name>alpha-D-galactose</name>
        <dbReference type="ChEBI" id="CHEBI:28061"/>
    </ligand>
</feature>
<feature type="binding site" evidence="1">
    <location>
        <position position="54"/>
    </location>
    <ligand>
        <name>alpha-D-galactose</name>
        <dbReference type="ChEBI" id="CHEBI:28061"/>
    </ligand>
</feature>
<feature type="binding site" evidence="1">
    <location>
        <position position="56"/>
    </location>
    <ligand>
        <name>alpha-D-galactose</name>
        <dbReference type="ChEBI" id="CHEBI:28061"/>
    </ligand>
</feature>
<feature type="binding site" evidence="1">
    <location>
        <position position="150"/>
    </location>
    <ligand>
        <name>ATP</name>
        <dbReference type="ChEBI" id="CHEBI:30616"/>
    </ligand>
</feature>
<feature type="binding site" evidence="1">
    <location>
        <position position="152"/>
    </location>
    <ligand>
        <name>ATP</name>
        <dbReference type="ChEBI" id="CHEBI:30616"/>
    </ligand>
</feature>
<feature type="binding site" evidence="1">
    <location>
        <position position="154"/>
    </location>
    <ligand>
        <name>ATP</name>
        <dbReference type="ChEBI" id="CHEBI:30616"/>
    </ligand>
</feature>
<feature type="binding site" evidence="1">
    <location>
        <position position="155"/>
    </location>
    <ligand>
        <name>ATP</name>
        <dbReference type="ChEBI" id="CHEBI:30616"/>
    </ligand>
</feature>
<feature type="binding site" evidence="1">
    <location>
        <position position="196"/>
    </location>
    <ligand>
        <name>alpha-D-galactose</name>
        <dbReference type="ChEBI" id="CHEBI:28061"/>
    </ligand>
</feature>
<feature type="binding site" evidence="1">
    <location>
        <position position="200"/>
    </location>
    <ligand>
        <name>alpha-D-galactose</name>
        <dbReference type="ChEBI" id="CHEBI:28061"/>
    </ligand>
</feature>
<feature type="binding site" evidence="1">
    <location>
        <position position="244"/>
    </location>
    <ligand>
        <name>ATP</name>
        <dbReference type="ChEBI" id="CHEBI:30616"/>
    </ligand>
</feature>
<feature type="binding site" evidence="1">
    <location>
        <position position="245"/>
    </location>
    <ligand>
        <name>ATP</name>
        <dbReference type="ChEBI" id="CHEBI:30616"/>
    </ligand>
</feature>
<feature type="binding site" evidence="1">
    <location>
        <position position="246"/>
    </location>
    <ligand>
        <name>ATP</name>
        <dbReference type="ChEBI" id="CHEBI:30616"/>
    </ligand>
</feature>
<feature type="binding site" evidence="1">
    <location>
        <position position="254"/>
    </location>
    <ligand>
        <name>alpha-D-galactose</name>
        <dbReference type="ChEBI" id="CHEBI:28061"/>
    </ligand>
</feature>
<feature type="site" description="Transition state stabilizer" evidence="2">
    <location>
        <position position="47"/>
    </location>
</feature>
<protein>
    <recommendedName>
        <fullName evidence="1">Galactokinase</fullName>
        <ecNumber evidence="1">2.7.1.6</ecNumber>
    </recommendedName>
    <alternativeName>
        <fullName evidence="1">Galactose kinase</fullName>
    </alternativeName>
</protein>
<organism>
    <name type="scientific">Candida parapsilosis</name>
    <name type="common">Yeast</name>
    <dbReference type="NCBI Taxonomy" id="5480"/>
    <lineage>
        <taxon>Eukaryota</taxon>
        <taxon>Fungi</taxon>
        <taxon>Dikarya</taxon>
        <taxon>Ascomycota</taxon>
        <taxon>Saccharomycotina</taxon>
        <taxon>Pichiomycetes</taxon>
        <taxon>Debaryomycetaceae</taxon>
        <taxon>Candida/Lodderomyces clade</taxon>
        <taxon>Candida</taxon>
    </lineage>
</organism>
<sequence>MSVPKFNDLSFYSDPSAHKSRYANLVKTFKSKYPNDEIEFFARSPGRVNLIGDHIDYNYFPVLPMAIEVDVVAAVSTNNNDMIVIANTDSAKFPKETVSLAEEFTIDREHHTWANYFKCGLIVASKFLQEKAMTKLKGMNITFSGTVPTGGGLSSSAAFCVASTLAVLYANGVEDISKADLTRITVVSEHYLGLNNGGMDQCASVYGEQGKALFIQFKPQLKGTPFEFPVKNLTFVITNSLQVSNKYETAPIHYNLRVVEMAIAGDLLAKKLNVEGKEGIVKDSNVDTYSLRGVMDGYCGAWDGEDLDVGVVHLEKMIDVVGKTLTKEGGYTVEQCCEEMGLTPEEFHSRYLKKIPVKFDVLKLYERALHVYRESLRVLKTLQLLSTVVDASQFLQTFGSLMNESQHDLDILNESSNPKLNEICSIALANGAYGSRVTGAGWGGSIVHLTTTENLPKLTKSLEAYYKREFPGITDEEIREAVIDSKPATGSCLVKLDFSHALQG</sequence>
<dbReference type="EC" id="2.7.1.6" evidence="1"/>
<dbReference type="EMBL" id="Y14704">
    <property type="protein sequence ID" value="CAA75006.1"/>
    <property type="molecule type" value="Genomic_DNA"/>
</dbReference>
<dbReference type="SMR" id="O42821"/>
<dbReference type="CGD" id="CAL0000150901">
    <property type="gene designation" value="GAL1"/>
</dbReference>
<dbReference type="VEuPathDB" id="FungiDB:CPAR2_106130"/>
<dbReference type="OrthoDB" id="187738at2759"/>
<dbReference type="UniPathway" id="UPA00214"/>
<dbReference type="GO" id="GO:0005829">
    <property type="term" value="C:cytosol"/>
    <property type="evidence" value="ECO:0007669"/>
    <property type="project" value="TreeGrafter"/>
</dbReference>
<dbReference type="GO" id="GO:0005524">
    <property type="term" value="F:ATP binding"/>
    <property type="evidence" value="ECO:0007669"/>
    <property type="project" value="UniProtKB-KW"/>
</dbReference>
<dbReference type="GO" id="GO:0004335">
    <property type="term" value="F:galactokinase activity"/>
    <property type="evidence" value="ECO:0007669"/>
    <property type="project" value="UniProtKB-EC"/>
</dbReference>
<dbReference type="GO" id="GO:0006012">
    <property type="term" value="P:galactose metabolic process"/>
    <property type="evidence" value="ECO:0007669"/>
    <property type="project" value="UniProtKB-UniPathway"/>
</dbReference>
<dbReference type="FunFam" id="1.20.1440.340:FF:000003">
    <property type="entry name" value="GAL1p Galactokinase"/>
    <property type="match status" value="1"/>
</dbReference>
<dbReference type="FunFam" id="3.30.230.10:FF:000056">
    <property type="entry name" value="GAL1p Galactokinase"/>
    <property type="match status" value="1"/>
</dbReference>
<dbReference type="Gene3D" id="1.20.1440.340">
    <property type="match status" value="1"/>
</dbReference>
<dbReference type="Gene3D" id="3.30.230.10">
    <property type="match status" value="1"/>
</dbReference>
<dbReference type="Gene3D" id="3.30.70.3170">
    <property type="match status" value="1"/>
</dbReference>
<dbReference type="InterPro" id="IPR000705">
    <property type="entry name" value="Galactokinase"/>
</dbReference>
<dbReference type="InterPro" id="IPR019741">
    <property type="entry name" value="Galactokinase_CS"/>
</dbReference>
<dbReference type="InterPro" id="IPR019539">
    <property type="entry name" value="GalKase_N"/>
</dbReference>
<dbReference type="InterPro" id="IPR013750">
    <property type="entry name" value="GHMP_kinase_C_dom"/>
</dbReference>
<dbReference type="InterPro" id="IPR036554">
    <property type="entry name" value="GHMP_kinase_C_sf"/>
</dbReference>
<dbReference type="InterPro" id="IPR006204">
    <property type="entry name" value="GHMP_kinase_N_dom"/>
</dbReference>
<dbReference type="InterPro" id="IPR006203">
    <property type="entry name" value="GHMP_knse_ATP-bd_CS"/>
</dbReference>
<dbReference type="InterPro" id="IPR006206">
    <property type="entry name" value="Mevalonate/galactokinase"/>
</dbReference>
<dbReference type="InterPro" id="IPR020568">
    <property type="entry name" value="Ribosomal_Su5_D2-typ_SF"/>
</dbReference>
<dbReference type="InterPro" id="IPR014721">
    <property type="entry name" value="Ribsml_uS5_D2-typ_fold_subgr"/>
</dbReference>
<dbReference type="NCBIfam" id="TIGR00131">
    <property type="entry name" value="gal_kin"/>
    <property type="match status" value="1"/>
</dbReference>
<dbReference type="PANTHER" id="PTHR10457:SF7">
    <property type="entry name" value="GALACTOKINASE-RELATED"/>
    <property type="match status" value="1"/>
</dbReference>
<dbReference type="PANTHER" id="PTHR10457">
    <property type="entry name" value="MEVALONATE KINASE/GALACTOKINASE"/>
    <property type="match status" value="1"/>
</dbReference>
<dbReference type="Pfam" id="PF10509">
    <property type="entry name" value="GalKase_gal_bdg"/>
    <property type="match status" value="1"/>
</dbReference>
<dbReference type="Pfam" id="PF08544">
    <property type="entry name" value="GHMP_kinases_C"/>
    <property type="match status" value="1"/>
</dbReference>
<dbReference type="Pfam" id="PF00288">
    <property type="entry name" value="GHMP_kinases_N"/>
    <property type="match status" value="1"/>
</dbReference>
<dbReference type="PIRSF" id="PIRSF000530">
    <property type="entry name" value="Galactokinase"/>
    <property type="match status" value="1"/>
</dbReference>
<dbReference type="PRINTS" id="PR00473">
    <property type="entry name" value="GALCTOKINASE"/>
</dbReference>
<dbReference type="PRINTS" id="PR00959">
    <property type="entry name" value="MEVGALKINASE"/>
</dbReference>
<dbReference type="SUPFAM" id="SSF55060">
    <property type="entry name" value="GHMP Kinase, C-terminal domain"/>
    <property type="match status" value="1"/>
</dbReference>
<dbReference type="SUPFAM" id="SSF54211">
    <property type="entry name" value="Ribosomal protein S5 domain 2-like"/>
    <property type="match status" value="1"/>
</dbReference>
<dbReference type="PROSITE" id="PS00106">
    <property type="entry name" value="GALACTOKINASE"/>
    <property type="match status" value="1"/>
</dbReference>
<dbReference type="PROSITE" id="PS00627">
    <property type="entry name" value="GHMP_KINASES_ATP"/>
    <property type="match status" value="1"/>
</dbReference>
<reference key="1">
    <citation type="submission" date="1997-08" db="EMBL/GenBank/DDBJ databases">
        <authorList>
            <person name="Nosek J."/>
        </authorList>
    </citation>
    <scope>NUCLEOTIDE SEQUENCE [GENOMIC DNA]</scope>
    <source>
        <strain>SR23 / CBS 7157</strain>
    </source>
</reference>
<name>GAL1_CANPA</name>
<comment type="function">
    <text evidence="1">Galactokinase is a key enzyme in the galactose metabolism where it catalyzes the conversion of alpha-D-galactose to galactose 1-phosphate (By similarity). Can also induce the transcription of the gal genes in response to the organism being challenged with galactose as the sole source of carbon (By similarity).</text>
</comment>
<comment type="catalytic activity">
    <reaction evidence="1">
        <text>alpha-D-galactose + ATP = alpha-D-galactose 1-phosphate + ADP + H(+)</text>
        <dbReference type="Rhea" id="RHEA:13553"/>
        <dbReference type="ChEBI" id="CHEBI:15378"/>
        <dbReference type="ChEBI" id="CHEBI:28061"/>
        <dbReference type="ChEBI" id="CHEBI:30616"/>
        <dbReference type="ChEBI" id="CHEBI:58336"/>
        <dbReference type="ChEBI" id="CHEBI:456216"/>
        <dbReference type="EC" id="2.7.1.6"/>
    </reaction>
    <physiologicalReaction direction="left-to-right" evidence="1">
        <dbReference type="Rhea" id="RHEA:13554"/>
    </physiologicalReaction>
</comment>
<comment type="pathway">
    <text evidence="1">Carbohydrate metabolism; galactose metabolism.</text>
</comment>
<comment type="similarity">
    <text evidence="3">Belongs to the GHMP kinase family. GalK subfamily.</text>
</comment>